<accession>Q5SVJ3</accession>
<accession>Q5SVJ4</accession>
<dbReference type="EMBL" id="AL645465">
    <property type="status" value="NOT_ANNOTATED_CDS"/>
    <property type="molecule type" value="Genomic_DNA"/>
</dbReference>
<dbReference type="EMBL" id="BC054479">
    <property type="status" value="NOT_ANNOTATED_CDS"/>
    <property type="molecule type" value="mRNA"/>
</dbReference>
<dbReference type="CCDS" id="CCDS31079.1">
    <molecule id="Q5SVJ3-1"/>
</dbReference>
<dbReference type="CCDS" id="CCDS60465.1">
    <molecule id="Q5SVJ3-2"/>
</dbReference>
<dbReference type="RefSeq" id="NP_001012988.1">
    <molecule id="Q5SVJ3-1"/>
    <property type="nucleotide sequence ID" value="NM_001012970.3"/>
</dbReference>
<dbReference type="RefSeq" id="NP_001263277.1">
    <molecule id="Q5SVJ3-2"/>
    <property type="nucleotide sequence ID" value="NM_001276348.2"/>
</dbReference>
<dbReference type="FunCoup" id="Q5SVJ3">
    <property type="interactions" value="4"/>
</dbReference>
<dbReference type="STRING" id="9606.ENSP00000311218"/>
<dbReference type="iPTMnet" id="Q5SVJ3"/>
<dbReference type="PhosphoSitePlus" id="Q5SVJ3"/>
<dbReference type="BioMuta" id="C1orf100"/>
<dbReference type="MassIVE" id="Q5SVJ3"/>
<dbReference type="PaxDb" id="9606-ENSP00000311218"/>
<dbReference type="PeptideAtlas" id="Q5SVJ3"/>
<dbReference type="ProteomicsDB" id="63935">
    <molecule id="Q5SVJ3-1"/>
</dbReference>
<dbReference type="ProteomicsDB" id="63936">
    <molecule id="Q5SVJ3-2"/>
</dbReference>
<dbReference type="Antibodypedia" id="34712">
    <property type="antibodies" value="37 antibodies from 7 providers"/>
</dbReference>
<dbReference type="DNASU" id="200159"/>
<dbReference type="Ensembl" id="ENST00000308105.5">
    <molecule id="Q5SVJ3-1"/>
    <property type="protein sequence ID" value="ENSP00000311218.4"/>
    <property type="gene ID" value="ENSG00000173728.11"/>
</dbReference>
<dbReference type="Ensembl" id="ENST00000366537.5">
    <molecule id="Q5SVJ3-2"/>
    <property type="protein sequence ID" value="ENSP00000355495.1"/>
    <property type="gene ID" value="ENSG00000173728.11"/>
</dbReference>
<dbReference type="GeneID" id="200159"/>
<dbReference type="KEGG" id="hsa:200159"/>
<dbReference type="MANE-Select" id="ENST00000308105.5">
    <property type="protein sequence ID" value="ENSP00000311218.4"/>
    <property type="RefSeq nucleotide sequence ID" value="NM_001012970.3"/>
    <property type="RefSeq protein sequence ID" value="NP_001012988.1"/>
</dbReference>
<dbReference type="UCSC" id="uc001iah.5">
    <molecule id="Q5SVJ3-1"/>
    <property type="organism name" value="human"/>
</dbReference>
<dbReference type="AGR" id="HGNC:30435"/>
<dbReference type="CTD" id="200159"/>
<dbReference type="DisGeNET" id="200159"/>
<dbReference type="GeneCards" id="SPMIP3"/>
<dbReference type="HGNC" id="HGNC:30435">
    <property type="gene designation" value="SPMIP3"/>
</dbReference>
<dbReference type="HPA" id="ENSG00000173728">
    <property type="expression patterns" value="Tissue enriched (testis)"/>
</dbReference>
<dbReference type="neXtProt" id="NX_Q5SVJ3"/>
<dbReference type="OpenTargets" id="ENSG00000173728"/>
<dbReference type="PharmGKB" id="PA142672484"/>
<dbReference type="VEuPathDB" id="HostDB:ENSG00000173728"/>
<dbReference type="eggNOG" id="ENOG502STJK">
    <property type="taxonomic scope" value="Eukaryota"/>
</dbReference>
<dbReference type="GeneTree" id="ENSGT00390000017364"/>
<dbReference type="HOGENOM" id="CLU_149432_0_0_1"/>
<dbReference type="InParanoid" id="Q5SVJ3"/>
<dbReference type="OMA" id="HIWLREF"/>
<dbReference type="OrthoDB" id="10034627at2759"/>
<dbReference type="PAN-GO" id="Q5SVJ3">
    <property type="GO annotations" value="0 GO annotations based on evolutionary models"/>
</dbReference>
<dbReference type="PhylomeDB" id="Q5SVJ3"/>
<dbReference type="TreeFam" id="TF337910"/>
<dbReference type="PathwayCommons" id="Q5SVJ3"/>
<dbReference type="BioGRID-ORCS" id="200159">
    <property type="hits" value="10 hits in 1113 CRISPR screens"/>
</dbReference>
<dbReference type="ChiTaRS" id="C1orf100">
    <property type="organism name" value="human"/>
</dbReference>
<dbReference type="GenomeRNAi" id="200159"/>
<dbReference type="Pharos" id="Q5SVJ3">
    <property type="development level" value="Tdark"/>
</dbReference>
<dbReference type="PRO" id="PR:Q5SVJ3"/>
<dbReference type="Proteomes" id="UP000005640">
    <property type="component" value="Chromosome 1"/>
</dbReference>
<dbReference type="RNAct" id="Q5SVJ3">
    <property type="molecule type" value="protein"/>
</dbReference>
<dbReference type="Bgee" id="ENSG00000173728">
    <property type="expression patterns" value="Expressed in male germ line stem cell (sensu Vertebrata) in testis and 99 other cell types or tissues"/>
</dbReference>
<dbReference type="InterPro" id="IPR037668">
    <property type="entry name" value="SPMIP3"/>
</dbReference>
<dbReference type="PANTHER" id="PTHR31763:SF2">
    <property type="entry name" value="CHROMOSOME 1 OPEN READING FRAME 100"/>
    <property type="match status" value="1"/>
</dbReference>
<dbReference type="PANTHER" id="PTHR31763">
    <property type="entry name" value="HYPOTHETICAL PROTEIN LOC689766"/>
    <property type="match status" value="1"/>
</dbReference>
<dbReference type="Pfam" id="PF17670">
    <property type="entry name" value="DUF5530"/>
    <property type="match status" value="1"/>
</dbReference>
<organism>
    <name type="scientific">Homo sapiens</name>
    <name type="common">Human</name>
    <dbReference type="NCBI Taxonomy" id="9606"/>
    <lineage>
        <taxon>Eukaryota</taxon>
        <taxon>Metazoa</taxon>
        <taxon>Chordata</taxon>
        <taxon>Craniata</taxon>
        <taxon>Vertebrata</taxon>
        <taxon>Euteleostomi</taxon>
        <taxon>Mammalia</taxon>
        <taxon>Eutheria</taxon>
        <taxon>Euarchontoglires</taxon>
        <taxon>Primates</taxon>
        <taxon>Haplorrhini</taxon>
        <taxon>Catarrhini</taxon>
        <taxon>Hominidae</taxon>
        <taxon>Homo</taxon>
    </lineage>
</organism>
<sequence length="147" mass="17617">MTAIRLREFIERRPVIPPSIFIAHQGRDVQGYYPGQLARLHFDHSAKRAPRPLIDLTIPPKTKYHYQPQLDQQTLIRYICLRRHSKPAEPWYKETTYRRDYSLPFYEIDWNQKLATVSLNPRPLNSLPELYCCEERSSFERNAFKLK</sequence>
<proteinExistence type="evidence at protein level"/>
<keyword id="KW-0025">Alternative splicing</keyword>
<keyword id="KW-1267">Proteomics identification</keyword>
<keyword id="KW-1185">Reference proteome</keyword>
<comment type="alternative products">
    <event type="alternative splicing"/>
    <isoform>
        <id>Q5SVJ3-1</id>
        <name>1</name>
        <sequence type="displayed"/>
    </isoform>
    <isoform>
        <id>Q5SVJ3-2</id>
        <name>2</name>
        <sequence type="described" ref="VSP_022710"/>
    </isoform>
</comment>
<evidence type="ECO:0000303" key="1">
    <source>
    </source>
</evidence>
<evidence type="ECO:0000305" key="2"/>
<evidence type="ECO:0000312" key="3">
    <source>
        <dbReference type="HGNC" id="HGNC:30435"/>
    </source>
</evidence>
<name>SMIP3_HUMAN</name>
<reference key="1">
    <citation type="journal article" date="2006" name="Nature">
        <title>The DNA sequence and biological annotation of human chromosome 1.</title>
        <authorList>
            <person name="Gregory S.G."/>
            <person name="Barlow K.F."/>
            <person name="McLay K.E."/>
            <person name="Kaul R."/>
            <person name="Swarbreck D."/>
            <person name="Dunham A."/>
            <person name="Scott C.E."/>
            <person name="Howe K.L."/>
            <person name="Woodfine K."/>
            <person name="Spencer C.C.A."/>
            <person name="Jones M.C."/>
            <person name="Gillson C."/>
            <person name="Searle S."/>
            <person name="Zhou Y."/>
            <person name="Kokocinski F."/>
            <person name="McDonald L."/>
            <person name="Evans R."/>
            <person name="Phillips K."/>
            <person name="Atkinson A."/>
            <person name="Cooper R."/>
            <person name="Jones C."/>
            <person name="Hall R.E."/>
            <person name="Andrews T.D."/>
            <person name="Lloyd C."/>
            <person name="Ainscough R."/>
            <person name="Almeida J.P."/>
            <person name="Ambrose K.D."/>
            <person name="Anderson F."/>
            <person name="Andrew R.W."/>
            <person name="Ashwell R.I.S."/>
            <person name="Aubin K."/>
            <person name="Babbage A.K."/>
            <person name="Bagguley C.L."/>
            <person name="Bailey J."/>
            <person name="Beasley H."/>
            <person name="Bethel G."/>
            <person name="Bird C.P."/>
            <person name="Bray-Allen S."/>
            <person name="Brown J.Y."/>
            <person name="Brown A.J."/>
            <person name="Buckley D."/>
            <person name="Burton J."/>
            <person name="Bye J."/>
            <person name="Carder C."/>
            <person name="Chapman J.C."/>
            <person name="Clark S.Y."/>
            <person name="Clarke G."/>
            <person name="Clee C."/>
            <person name="Cobley V."/>
            <person name="Collier R.E."/>
            <person name="Corby N."/>
            <person name="Coville G.J."/>
            <person name="Davies J."/>
            <person name="Deadman R."/>
            <person name="Dunn M."/>
            <person name="Earthrowl M."/>
            <person name="Ellington A.G."/>
            <person name="Errington H."/>
            <person name="Frankish A."/>
            <person name="Frankland J."/>
            <person name="French L."/>
            <person name="Garner P."/>
            <person name="Garnett J."/>
            <person name="Gay L."/>
            <person name="Ghori M.R.J."/>
            <person name="Gibson R."/>
            <person name="Gilby L.M."/>
            <person name="Gillett W."/>
            <person name="Glithero R.J."/>
            <person name="Grafham D.V."/>
            <person name="Griffiths C."/>
            <person name="Griffiths-Jones S."/>
            <person name="Grocock R."/>
            <person name="Hammond S."/>
            <person name="Harrison E.S.I."/>
            <person name="Hart E."/>
            <person name="Haugen E."/>
            <person name="Heath P.D."/>
            <person name="Holmes S."/>
            <person name="Holt K."/>
            <person name="Howden P.J."/>
            <person name="Hunt A.R."/>
            <person name="Hunt S.E."/>
            <person name="Hunter G."/>
            <person name="Isherwood J."/>
            <person name="James R."/>
            <person name="Johnson C."/>
            <person name="Johnson D."/>
            <person name="Joy A."/>
            <person name="Kay M."/>
            <person name="Kershaw J.K."/>
            <person name="Kibukawa M."/>
            <person name="Kimberley A.M."/>
            <person name="King A."/>
            <person name="Knights A.J."/>
            <person name="Lad H."/>
            <person name="Laird G."/>
            <person name="Lawlor S."/>
            <person name="Leongamornlert D.A."/>
            <person name="Lloyd D.M."/>
            <person name="Loveland J."/>
            <person name="Lovell J."/>
            <person name="Lush M.J."/>
            <person name="Lyne R."/>
            <person name="Martin S."/>
            <person name="Mashreghi-Mohammadi M."/>
            <person name="Matthews L."/>
            <person name="Matthews N.S.W."/>
            <person name="McLaren S."/>
            <person name="Milne S."/>
            <person name="Mistry S."/>
            <person name="Moore M.J.F."/>
            <person name="Nickerson T."/>
            <person name="O'Dell C.N."/>
            <person name="Oliver K."/>
            <person name="Palmeiri A."/>
            <person name="Palmer S.A."/>
            <person name="Parker A."/>
            <person name="Patel D."/>
            <person name="Pearce A.V."/>
            <person name="Peck A.I."/>
            <person name="Pelan S."/>
            <person name="Phelps K."/>
            <person name="Phillimore B.J."/>
            <person name="Plumb R."/>
            <person name="Rajan J."/>
            <person name="Raymond C."/>
            <person name="Rouse G."/>
            <person name="Saenphimmachak C."/>
            <person name="Sehra H.K."/>
            <person name="Sheridan E."/>
            <person name="Shownkeen R."/>
            <person name="Sims S."/>
            <person name="Skuce C.D."/>
            <person name="Smith M."/>
            <person name="Steward C."/>
            <person name="Subramanian S."/>
            <person name="Sycamore N."/>
            <person name="Tracey A."/>
            <person name="Tromans A."/>
            <person name="Van Helmond Z."/>
            <person name="Wall M."/>
            <person name="Wallis J.M."/>
            <person name="White S."/>
            <person name="Whitehead S.L."/>
            <person name="Wilkinson J.E."/>
            <person name="Willey D.L."/>
            <person name="Williams H."/>
            <person name="Wilming L."/>
            <person name="Wray P.W."/>
            <person name="Wu Z."/>
            <person name="Coulson A."/>
            <person name="Vaudin M."/>
            <person name="Sulston J.E."/>
            <person name="Durbin R.M."/>
            <person name="Hubbard T."/>
            <person name="Wooster R."/>
            <person name="Dunham I."/>
            <person name="Carter N.P."/>
            <person name="McVean G."/>
            <person name="Ross M.T."/>
            <person name="Harrow J."/>
            <person name="Olson M.V."/>
            <person name="Beck S."/>
            <person name="Rogers J."/>
            <person name="Bentley D.R."/>
        </authorList>
    </citation>
    <scope>NUCLEOTIDE SEQUENCE [LARGE SCALE GENOMIC DNA]</scope>
</reference>
<reference key="2">
    <citation type="journal article" date="2004" name="Genome Res.">
        <title>The status, quality, and expansion of the NIH full-length cDNA project: the Mammalian Gene Collection (MGC).</title>
        <authorList>
            <consortium name="The MGC Project Team"/>
        </authorList>
    </citation>
    <scope>NUCLEOTIDE SEQUENCE [LARGE SCALE MRNA] (ISOFORM 2)</scope>
    <source>
        <tissue>Testis</tissue>
    </source>
</reference>
<feature type="chain" id="PRO_0000274315" description="Protein SPMIP3">
    <location>
        <begin position="1"/>
        <end position="147"/>
    </location>
</feature>
<feature type="splice variant" id="VSP_022710" description="In isoform 2." evidence="1">
    <location>
        <begin position="52"/>
        <end position="83"/>
    </location>
</feature>
<protein>
    <recommendedName>
        <fullName evidence="2">Protein SPMIP3</fullName>
    </recommendedName>
    <alternativeName>
        <fullName evidence="3">Sperm-associated microtubule inner protein 3</fullName>
    </alternativeName>
</protein>
<gene>
    <name evidence="3" type="primary">SPMIP3</name>
    <name type="synonym">C1orf100</name>
</gene>